<proteinExistence type="inferred from homology"/>
<feature type="chain" id="PRO_0000241390" description="Large ribosomal subunit protein uL3">
    <location>
        <begin position="1"/>
        <end position="211"/>
    </location>
</feature>
<feature type="modified residue" description="N5-methylglutamine" evidence="1">
    <location>
        <position position="150"/>
    </location>
</feature>
<protein>
    <recommendedName>
        <fullName evidence="1">Large ribosomal subunit protein uL3</fullName>
    </recommendedName>
    <alternativeName>
        <fullName evidence="2">50S ribosomal protein L3</fullName>
    </alternativeName>
</protein>
<name>RL3_PSEPF</name>
<dbReference type="EMBL" id="CP000094">
    <property type="protein sequence ID" value="ABA76816.1"/>
    <property type="molecule type" value="Genomic_DNA"/>
</dbReference>
<dbReference type="RefSeq" id="WP_007955641.1">
    <property type="nucleotide sequence ID" value="NC_007492.2"/>
</dbReference>
<dbReference type="SMR" id="Q3K5Y8"/>
<dbReference type="KEGG" id="pfo:Pfl01_5079"/>
<dbReference type="eggNOG" id="COG0087">
    <property type="taxonomic scope" value="Bacteria"/>
</dbReference>
<dbReference type="HOGENOM" id="CLU_044142_4_1_6"/>
<dbReference type="Proteomes" id="UP000002704">
    <property type="component" value="Chromosome"/>
</dbReference>
<dbReference type="GO" id="GO:0022625">
    <property type="term" value="C:cytosolic large ribosomal subunit"/>
    <property type="evidence" value="ECO:0007669"/>
    <property type="project" value="TreeGrafter"/>
</dbReference>
<dbReference type="GO" id="GO:0019843">
    <property type="term" value="F:rRNA binding"/>
    <property type="evidence" value="ECO:0007669"/>
    <property type="project" value="UniProtKB-UniRule"/>
</dbReference>
<dbReference type="GO" id="GO:0003735">
    <property type="term" value="F:structural constituent of ribosome"/>
    <property type="evidence" value="ECO:0007669"/>
    <property type="project" value="InterPro"/>
</dbReference>
<dbReference type="GO" id="GO:0006412">
    <property type="term" value="P:translation"/>
    <property type="evidence" value="ECO:0007669"/>
    <property type="project" value="UniProtKB-UniRule"/>
</dbReference>
<dbReference type="FunFam" id="2.40.30.10:FF:000004">
    <property type="entry name" value="50S ribosomal protein L3"/>
    <property type="match status" value="1"/>
</dbReference>
<dbReference type="FunFam" id="3.30.160.810:FF:000001">
    <property type="entry name" value="50S ribosomal protein L3"/>
    <property type="match status" value="1"/>
</dbReference>
<dbReference type="Gene3D" id="3.30.160.810">
    <property type="match status" value="1"/>
</dbReference>
<dbReference type="Gene3D" id="2.40.30.10">
    <property type="entry name" value="Translation factors"/>
    <property type="match status" value="1"/>
</dbReference>
<dbReference type="HAMAP" id="MF_01325_B">
    <property type="entry name" value="Ribosomal_uL3_B"/>
    <property type="match status" value="1"/>
</dbReference>
<dbReference type="InterPro" id="IPR000597">
    <property type="entry name" value="Ribosomal_uL3"/>
</dbReference>
<dbReference type="InterPro" id="IPR019927">
    <property type="entry name" value="Ribosomal_uL3_bac/org-type"/>
</dbReference>
<dbReference type="InterPro" id="IPR019926">
    <property type="entry name" value="Ribosomal_uL3_CS"/>
</dbReference>
<dbReference type="InterPro" id="IPR009000">
    <property type="entry name" value="Transl_B-barrel_sf"/>
</dbReference>
<dbReference type="NCBIfam" id="TIGR03625">
    <property type="entry name" value="L3_bact"/>
    <property type="match status" value="1"/>
</dbReference>
<dbReference type="PANTHER" id="PTHR11229">
    <property type="entry name" value="50S RIBOSOMAL PROTEIN L3"/>
    <property type="match status" value="1"/>
</dbReference>
<dbReference type="PANTHER" id="PTHR11229:SF16">
    <property type="entry name" value="LARGE RIBOSOMAL SUBUNIT PROTEIN UL3C"/>
    <property type="match status" value="1"/>
</dbReference>
<dbReference type="Pfam" id="PF00297">
    <property type="entry name" value="Ribosomal_L3"/>
    <property type="match status" value="1"/>
</dbReference>
<dbReference type="SUPFAM" id="SSF50447">
    <property type="entry name" value="Translation proteins"/>
    <property type="match status" value="1"/>
</dbReference>
<dbReference type="PROSITE" id="PS00474">
    <property type="entry name" value="RIBOSOMAL_L3"/>
    <property type="match status" value="1"/>
</dbReference>
<organism>
    <name type="scientific">Pseudomonas fluorescens (strain Pf0-1)</name>
    <dbReference type="NCBI Taxonomy" id="205922"/>
    <lineage>
        <taxon>Bacteria</taxon>
        <taxon>Pseudomonadati</taxon>
        <taxon>Pseudomonadota</taxon>
        <taxon>Gammaproteobacteria</taxon>
        <taxon>Pseudomonadales</taxon>
        <taxon>Pseudomonadaceae</taxon>
        <taxon>Pseudomonas</taxon>
    </lineage>
</organism>
<keyword id="KW-0488">Methylation</keyword>
<keyword id="KW-0687">Ribonucleoprotein</keyword>
<keyword id="KW-0689">Ribosomal protein</keyword>
<keyword id="KW-0694">RNA-binding</keyword>
<keyword id="KW-0699">rRNA-binding</keyword>
<reference key="1">
    <citation type="journal article" date="2009" name="Genome Biol.">
        <title>Genomic and genetic analyses of diversity and plant interactions of Pseudomonas fluorescens.</title>
        <authorList>
            <person name="Silby M.W."/>
            <person name="Cerdeno-Tarraga A.M."/>
            <person name="Vernikos G.S."/>
            <person name="Giddens S.R."/>
            <person name="Jackson R.W."/>
            <person name="Preston G.M."/>
            <person name="Zhang X.-X."/>
            <person name="Moon C.D."/>
            <person name="Gehrig S.M."/>
            <person name="Godfrey S.A.C."/>
            <person name="Knight C.G."/>
            <person name="Malone J.G."/>
            <person name="Robinson Z."/>
            <person name="Spiers A.J."/>
            <person name="Harris S."/>
            <person name="Challis G.L."/>
            <person name="Yaxley A.M."/>
            <person name="Harris D."/>
            <person name="Seeger K."/>
            <person name="Murphy L."/>
            <person name="Rutter S."/>
            <person name="Squares R."/>
            <person name="Quail M.A."/>
            <person name="Saunders E."/>
            <person name="Mavromatis K."/>
            <person name="Brettin T.S."/>
            <person name="Bentley S.D."/>
            <person name="Hothersall J."/>
            <person name="Stephens E."/>
            <person name="Thomas C.M."/>
            <person name="Parkhill J."/>
            <person name="Levy S.B."/>
            <person name="Rainey P.B."/>
            <person name="Thomson N.R."/>
        </authorList>
    </citation>
    <scope>NUCLEOTIDE SEQUENCE [LARGE SCALE GENOMIC DNA]</scope>
    <source>
        <strain>Pf0-1</strain>
    </source>
</reference>
<accession>Q3K5Y8</accession>
<comment type="function">
    <text evidence="1">One of the primary rRNA binding proteins, it binds directly near the 3'-end of the 23S rRNA, where it nucleates assembly of the 50S subunit.</text>
</comment>
<comment type="subunit">
    <text evidence="1">Part of the 50S ribosomal subunit. Forms a cluster with proteins L14 and L19.</text>
</comment>
<comment type="PTM">
    <text evidence="1">Methylated by PrmB.</text>
</comment>
<comment type="similarity">
    <text evidence="1">Belongs to the universal ribosomal protein uL3 family.</text>
</comment>
<sequence>MTIGVVGRKAGMTRIFTEEGVSIPVTVIEIEPNRVTQFKTEETDGYRAVQVTVGERRASRVTAAQAGHFAKANVAAGRTVMEFRLEEGEYQAGDLINAEIFAAGQLVDVTGQSKGKGFQGTIKRWNFRGQDNTHGNSVSHRVPGSIGQCQTPGRVFKGKKMSGHMGAERVTVQSLEVVRVDAERNLLLVKGAVPGATGGNLVVRPAAKARG</sequence>
<gene>
    <name evidence="1" type="primary">rplC</name>
    <name type="ordered locus">Pfl01_5079</name>
</gene>
<evidence type="ECO:0000255" key="1">
    <source>
        <dbReference type="HAMAP-Rule" id="MF_01325"/>
    </source>
</evidence>
<evidence type="ECO:0000305" key="2"/>